<protein>
    <recommendedName>
        <fullName evidence="1">PAN2-PAN3 deadenylation complex subunit PAN3</fullName>
    </recommendedName>
    <alternativeName>
        <fullName evidence="1">PAB1P-dependent poly(A)-specific ribonuclease</fullName>
    </alternativeName>
    <alternativeName>
        <fullName evidence="1">Poly(A)-nuclease deadenylation complex subunit 3</fullName>
        <shortName evidence="1">PAN deadenylation complex subunit 3</shortName>
    </alternativeName>
</protein>
<sequence>MASAGKPALDDSRRGTGSPKMKARENAKDTLCRNVTIYGRCRYEDKGCAFNHDPLKVNSAYQFDSKKRFNVDSPSFTPSLLPSNGSSPTISSATMKKMATISPKAANAAPFQPRSVASRSNTSTPNSRQENINPDWTVAEVQEFVPQGFDVAHMTALQGNGNGTITPTNAFDPFVTASTPLSAGGAVGPVQPNPYSHDSAALGGAAFFPGSSGFQQPVQYHMYAPIGPHNQNTLGYQRNVHDLFLPNDFREELQKKAAATLQTLPNTQLPAQIDYFHSLVPLDLNHQKNATVFGFPSWVYKAQSSKDGNFYALRRLEGFRLTNEKAIRSVQAWKRVCNGSVVTIHDAFTSRSFQDSSLIFVTDYYPLSKTLAEQHLGTGQRFQGRHNVHIPEQVLWGYMTQIANALKAIHSNGLAARIIDASKILLTGKNRIRLNACAIMDVVQYDSQRTVADLQRQDLVNFGQLIVTLGANSPTVMHNPTKAMEHFTRAYSPQMKNSVFWLLNGLQKDQDRNIDIFITGISSQLMSTFDSALHLDDQLTSDLSRELENGRLVRLMTKLNLVNERPEYEHDRQWSENGERYFLKIFRDYVFHQVDAQGDAVVDLGHVLSCLNKLDAGSDEKITLVSRDEQSCFIVSYKELKKALESSFQALLKPARRMH</sequence>
<reference key="1">
    <citation type="journal article" date="2008" name="PLoS Genet.">
        <title>Genomic islands in the pathogenic filamentous fungus Aspergillus fumigatus.</title>
        <authorList>
            <person name="Fedorova N.D."/>
            <person name="Khaldi N."/>
            <person name="Joardar V.S."/>
            <person name="Maiti R."/>
            <person name="Amedeo P."/>
            <person name="Anderson M.J."/>
            <person name="Crabtree J."/>
            <person name="Silva J.C."/>
            <person name="Badger J.H."/>
            <person name="Albarraq A."/>
            <person name="Angiuoli S."/>
            <person name="Bussey H."/>
            <person name="Bowyer P."/>
            <person name="Cotty P.J."/>
            <person name="Dyer P.S."/>
            <person name="Egan A."/>
            <person name="Galens K."/>
            <person name="Fraser-Liggett C.M."/>
            <person name="Haas B.J."/>
            <person name="Inman J.M."/>
            <person name="Kent R."/>
            <person name="Lemieux S."/>
            <person name="Malavazi I."/>
            <person name="Orvis J."/>
            <person name="Roemer T."/>
            <person name="Ronning C.M."/>
            <person name="Sundaram J.P."/>
            <person name="Sutton G."/>
            <person name="Turner G."/>
            <person name="Venter J.C."/>
            <person name="White O.R."/>
            <person name="Whitty B.R."/>
            <person name="Youngman P."/>
            <person name="Wolfe K.H."/>
            <person name="Goldman G.H."/>
            <person name="Wortman J.R."/>
            <person name="Jiang B."/>
            <person name="Denning D.W."/>
            <person name="Nierman W.C."/>
        </authorList>
    </citation>
    <scope>NUCLEOTIDE SEQUENCE [LARGE SCALE GENOMIC DNA]</scope>
    <source>
        <strain>ATCC 1007 / CBS 513.65 / DSM 816 / NCTC 3887 / NRRL 1 / QM 1276 / 107</strain>
    </source>
</reference>
<organism>
    <name type="scientific">Aspergillus clavatus (strain ATCC 1007 / CBS 513.65 / DSM 816 / NCTC 3887 / NRRL 1 / QM 1276 / 107)</name>
    <dbReference type="NCBI Taxonomy" id="344612"/>
    <lineage>
        <taxon>Eukaryota</taxon>
        <taxon>Fungi</taxon>
        <taxon>Dikarya</taxon>
        <taxon>Ascomycota</taxon>
        <taxon>Pezizomycotina</taxon>
        <taxon>Eurotiomycetes</taxon>
        <taxon>Eurotiomycetidae</taxon>
        <taxon>Eurotiales</taxon>
        <taxon>Aspergillaceae</taxon>
        <taxon>Aspergillus</taxon>
        <taxon>Aspergillus subgen. Fumigati</taxon>
    </lineage>
</organism>
<evidence type="ECO:0000255" key="1">
    <source>
        <dbReference type="HAMAP-Rule" id="MF_03181"/>
    </source>
</evidence>
<evidence type="ECO:0000256" key="2">
    <source>
        <dbReference type="SAM" id="MobiDB-lite"/>
    </source>
</evidence>
<evidence type="ECO:0000305" key="3"/>
<gene>
    <name evidence="1" type="primary">pan3</name>
    <name type="ORF">ACLA_021100</name>
</gene>
<name>PAN3_ASPCL</name>
<proteinExistence type="inferred from homology"/>
<accession>A1CP31</accession>
<feature type="chain" id="PRO_0000295357" description="PAN2-PAN3 deadenylation complex subunit PAN3">
    <location>
        <begin position="1"/>
        <end position="659"/>
    </location>
</feature>
<feature type="zinc finger region" description="C3H1-type" evidence="1">
    <location>
        <begin position="26"/>
        <end position="55"/>
    </location>
</feature>
<feature type="region of interest" description="Disordered" evidence="2">
    <location>
        <begin position="1"/>
        <end position="26"/>
    </location>
</feature>
<feature type="region of interest" description="Disordered" evidence="2">
    <location>
        <begin position="103"/>
        <end position="132"/>
    </location>
</feature>
<feature type="region of interest" description="Pseudokinase domain" evidence="1">
    <location>
        <begin position="262"/>
        <end position="522"/>
    </location>
</feature>
<feature type="region of interest" description="Knob domain" evidence="1">
    <location>
        <begin position="562"/>
        <end position="659"/>
    </location>
</feature>
<feature type="coiled-coil region" evidence="1">
    <location>
        <begin position="523"/>
        <end position="561"/>
    </location>
</feature>
<feature type="compositionally biased region" description="Polar residues" evidence="2">
    <location>
        <begin position="115"/>
        <end position="132"/>
    </location>
</feature>
<feature type="binding site" evidence="1">
    <location>
        <position position="314"/>
    </location>
    <ligand>
        <name>ATP</name>
        <dbReference type="ChEBI" id="CHEBI:30616"/>
    </ligand>
</feature>
<feature type="binding site" evidence="1">
    <location>
        <begin position="363"/>
        <end position="370"/>
    </location>
    <ligand>
        <name>ATP</name>
        <dbReference type="ChEBI" id="CHEBI:30616"/>
    </ligand>
</feature>
<feature type="binding site" evidence="1">
    <location>
        <begin position="422"/>
        <end position="423"/>
    </location>
    <ligand>
        <name>ATP</name>
        <dbReference type="ChEBI" id="CHEBI:30616"/>
    </ligand>
</feature>
<keyword id="KW-0067">ATP-binding</keyword>
<keyword id="KW-0175">Coiled coil</keyword>
<keyword id="KW-0963">Cytoplasm</keyword>
<keyword id="KW-0479">Metal-binding</keyword>
<keyword id="KW-0507">mRNA processing</keyword>
<keyword id="KW-0547">Nucleotide-binding</keyword>
<keyword id="KW-1185">Reference proteome</keyword>
<keyword id="KW-0862">Zinc</keyword>
<keyword id="KW-0863">Zinc-finger</keyword>
<dbReference type="EMBL" id="DS027059">
    <property type="protein sequence ID" value="EAW07402.1"/>
    <property type="status" value="ALT_SEQ"/>
    <property type="molecule type" value="Genomic_DNA"/>
</dbReference>
<dbReference type="RefSeq" id="XP_001268828.1">
    <property type="nucleotide sequence ID" value="XM_001268827.1"/>
</dbReference>
<dbReference type="SMR" id="A1CP31"/>
<dbReference type="STRING" id="344612.A1CP31"/>
<dbReference type="EnsemblFungi" id="EAW07402">
    <property type="protein sequence ID" value="EAW07402"/>
    <property type="gene ID" value="ACLA_021100"/>
</dbReference>
<dbReference type="GeneID" id="4700945"/>
<dbReference type="KEGG" id="act:ACLA_021100"/>
<dbReference type="eggNOG" id="KOG3741">
    <property type="taxonomic scope" value="Eukaryota"/>
</dbReference>
<dbReference type="OrthoDB" id="204958at2759"/>
<dbReference type="Proteomes" id="UP000006701">
    <property type="component" value="Unassembled WGS sequence"/>
</dbReference>
<dbReference type="GO" id="GO:0000932">
    <property type="term" value="C:P-body"/>
    <property type="evidence" value="ECO:0007669"/>
    <property type="project" value="TreeGrafter"/>
</dbReference>
<dbReference type="GO" id="GO:0031251">
    <property type="term" value="C:PAN complex"/>
    <property type="evidence" value="ECO:0007669"/>
    <property type="project" value="UniProtKB-UniRule"/>
</dbReference>
<dbReference type="GO" id="GO:0005524">
    <property type="term" value="F:ATP binding"/>
    <property type="evidence" value="ECO:0007669"/>
    <property type="project" value="UniProtKB-UniRule"/>
</dbReference>
<dbReference type="GO" id="GO:0008143">
    <property type="term" value="F:poly(A) binding"/>
    <property type="evidence" value="ECO:0007669"/>
    <property type="project" value="TreeGrafter"/>
</dbReference>
<dbReference type="GO" id="GO:0004672">
    <property type="term" value="F:protein kinase activity"/>
    <property type="evidence" value="ECO:0007669"/>
    <property type="project" value="InterPro"/>
</dbReference>
<dbReference type="GO" id="GO:0008270">
    <property type="term" value="F:zinc ion binding"/>
    <property type="evidence" value="ECO:0007669"/>
    <property type="project" value="UniProtKB-KW"/>
</dbReference>
<dbReference type="GO" id="GO:0006397">
    <property type="term" value="P:mRNA processing"/>
    <property type="evidence" value="ECO:0007669"/>
    <property type="project" value="UniProtKB-KW"/>
</dbReference>
<dbReference type="GO" id="GO:0000289">
    <property type="term" value="P:nuclear-transcribed mRNA poly(A) tail shortening"/>
    <property type="evidence" value="ECO:0007669"/>
    <property type="project" value="UniProtKB-UniRule"/>
</dbReference>
<dbReference type="FunFam" id="1.10.287.3700:FF:000001">
    <property type="entry name" value="PAN2-PAN3 deadenylation complex subunit PAN3"/>
    <property type="match status" value="1"/>
</dbReference>
<dbReference type="FunFam" id="1.10.510.10:FF:000520">
    <property type="entry name" value="PAN2-PAN3 deadenylation complex subunit PAN3"/>
    <property type="match status" value="1"/>
</dbReference>
<dbReference type="FunFam" id="1.20.5.5160:FF:000002">
    <property type="entry name" value="PAN2-PAN3 deadenylation complex subunit PAN3"/>
    <property type="match status" value="1"/>
</dbReference>
<dbReference type="Gene3D" id="1.10.287.3700">
    <property type="match status" value="1"/>
</dbReference>
<dbReference type="Gene3D" id="1.20.5.5160">
    <property type="match status" value="1"/>
</dbReference>
<dbReference type="Gene3D" id="6.10.250.3160">
    <property type="match status" value="1"/>
</dbReference>
<dbReference type="Gene3D" id="1.10.510.10">
    <property type="entry name" value="Transferase(Phosphotransferase) domain 1"/>
    <property type="match status" value="1"/>
</dbReference>
<dbReference type="HAMAP" id="MF_03181">
    <property type="entry name" value="PAN3"/>
    <property type="match status" value="1"/>
</dbReference>
<dbReference type="InterPro" id="IPR011009">
    <property type="entry name" value="Kinase-like_dom_sf"/>
</dbReference>
<dbReference type="InterPro" id="IPR030844">
    <property type="entry name" value="PAN3"/>
</dbReference>
<dbReference type="InterPro" id="IPR041332">
    <property type="entry name" value="Pan3_PK"/>
</dbReference>
<dbReference type="InterPro" id="IPR000719">
    <property type="entry name" value="Prot_kinase_dom"/>
</dbReference>
<dbReference type="InterPro" id="IPR000571">
    <property type="entry name" value="Znf_CCCH"/>
</dbReference>
<dbReference type="PANTHER" id="PTHR12272">
    <property type="entry name" value="DEADENYLATION COMPLEX SUBUNIT PAN3"/>
    <property type="match status" value="1"/>
</dbReference>
<dbReference type="PANTHER" id="PTHR12272:SF11">
    <property type="entry name" value="PAN2-PAN3 DEADENYLATION COMPLEX SUBUNIT PAN3"/>
    <property type="match status" value="1"/>
</dbReference>
<dbReference type="Pfam" id="PF18101">
    <property type="entry name" value="Pan3_PK"/>
    <property type="match status" value="1"/>
</dbReference>
<dbReference type="SUPFAM" id="SSF56112">
    <property type="entry name" value="Protein kinase-like (PK-like)"/>
    <property type="match status" value="1"/>
</dbReference>
<dbReference type="PROSITE" id="PS50011">
    <property type="entry name" value="PROTEIN_KINASE_DOM"/>
    <property type="match status" value="1"/>
</dbReference>
<dbReference type="PROSITE" id="PS50103">
    <property type="entry name" value="ZF_C3H1"/>
    <property type="match status" value="1"/>
</dbReference>
<comment type="function">
    <text evidence="1">Regulatory subunit of the poly(A)-nuclease (PAN) deadenylation complex, one of two cytoplasmic mRNA deadenylases involved in mRNA turnover. PAN specifically shortens poly(A) tails of RNA and the activity is stimulated by poly(A)-binding protein pab1. PAN deadenylation is followed by rapid degradation of the shortened mRNA tails by the CCR4-NOT complex. Deadenylated mRNAs are then degraded by two alternative mechanisms, namely exosome-mediated 3'-5' exonucleolytic degradation, or deadenylation-dependent mRNA decaping and subsequent 5'-3' exonucleolytic degradation by xrn1. May also be involved in post-transcriptional maturation of mRNA poly(A) tails. pan3 acts as a positive regulator for PAN activity, recruiting the catalytic subunit pan2 to mRNA via its interaction with RNA and with pab1.</text>
</comment>
<comment type="subunit">
    <text evidence="1">Homodimer. Forms a heterotrimer with a catalytic subunit pan2 to form the poly(A)-nuclease (PAN) deadenylation complex. Interacts (via PAM-2 motif) with poly(A)-binding protein pab1 (via PABC domain), conferring substrate specificity of the enzyme complex.</text>
</comment>
<comment type="subcellular location">
    <subcellularLocation>
        <location evidence="1">Cytoplasm</location>
    </subcellularLocation>
</comment>
<comment type="domain">
    <text evidence="1">The N-terminal zinc finger binds to poly(A) RNA.</text>
</comment>
<comment type="domain">
    <text evidence="1">Contains a pseudokinase domain. The protein kinase domain is predicted to be catalytically inactive because some of the residues important for catalytic activity are substituted and it lacks the equivalent of the binding site for a peptide substrate. However, it has retained an ATP-binding site and ATP-binding is required for mRNA degradation, stimulating the activity of the pan2 nuclease in vitro. The nucleotide-binding site is juxtaposed to the RNase active site of pan2 in the complex and may actually bind nucleosides of a poly(A) RNA rather than ATP, feeding the poly(A)-tail to the active site of the deadenylase and thus increasing the efficiency with which this distributive enzyme degrades oligo(A) RNAs.</text>
</comment>
<comment type="domain">
    <text evidence="1">The pseudokinase domain, the coiled-coil (CC), and C-terminal knob domain (CK) form a structural unit (PKC) that forms an extensive high-affinity interaction surface for pan2.</text>
</comment>
<comment type="similarity">
    <text evidence="1">Belongs to the protein kinase superfamily. PAN3 family.</text>
</comment>
<comment type="sequence caution" evidence="3">
    <conflict type="erroneous gene model prediction">
        <sequence resource="EMBL-CDS" id="EAW07402"/>
    </conflict>
</comment>